<accession>Q06561</accession>
<accession>O18261</accession>
<accession>O18263</accession>
<accession>Q6BEQ6</accession>
<accession>Q9U7E8</accession>
<accession>Q9XTD2</accession>
<accession>Q9XTI5</accession>
<gene>
    <name evidence="25" type="primary">unc-52</name>
    <name evidence="25" type="ORF">ZC101.2</name>
</gene>
<feature type="signal peptide" evidence="1">
    <location>
        <begin position="1"/>
        <end position="22"/>
    </location>
</feature>
<feature type="chain" id="PRO_0000026698" description="Basement membrane proteoglycan">
    <location>
        <begin position="23"/>
        <end position="3375"/>
    </location>
</feature>
<feature type="domain" description="Ig-like C2-type 1">
    <location>
        <begin position="45"/>
        <end position="130"/>
    </location>
</feature>
<feature type="domain" description="LDL-receptor class A 1" evidence="5">
    <location>
        <begin position="148"/>
        <end position="184"/>
    </location>
</feature>
<feature type="domain" description="LDL-receptor class A 2" evidence="5">
    <location>
        <begin position="189"/>
        <end position="225"/>
    </location>
</feature>
<feature type="domain" description="LDL-receptor class A 3" evidence="5">
    <location>
        <begin position="232"/>
        <end position="269"/>
    </location>
</feature>
<feature type="domain" description="Ig-like C2-type 2">
    <location>
        <begin position="271"/>
        <end position="355"/>
    </location>
</feature>
<feature type="domain" description="Laminin EGF-like 1; truncated" evidence="7">
    <location>
        <begin position="384"/>
        <end position="431"/>
    </location>
</feature>
<feature type="domain" description="Laminin EGF-like 2; first part" evidence="7">
    <location>
        <begin position="432"/>
        <end position="441"/>
    </location>
</feature>
<feature type="domain" description="Laminin IV type A 1" evidence="6">
    <location>
        <begin position="450"/>
        <end position="633"/>
    </location>
</feature>
<feature type="domain" description="Laminin EGF-like 2; second part" evidence="7">
    <location>
        <begin position="634"/>
        <end position="666"/>
    </location>
</feature>
<feature type="domain" description="Laminin EGF-like 3; truncated" evidence="7">
    <location>
        <begin position="674"/>
        <end position="720"/>
    </location>
</feature>
<feature type="domain" description="Laminin EGF-like 4; first part" evidence="7">
    <location>
        <begin position="721"/>
        <end position="730"/>
    </location>
</feature>
<feature type="domain" description="Laminin IV type A 2" evidence="6">
    <location>
        <begin position="740"/>
        <end position="921"/>
    </location>
</feature>
<feature type="domain" description="Laminin EGF-like 4; second part" evidence="7">
    <location>
        <begin position="922"/>
        <end position="954"/>
    </location>
</feature>
<feature type="domain" description="Laminin EGF-like 5" evidence="7">
    <location>
        <begin position="955"/>
        <end position="1004"/>
    </location>
</feature>
<feature type="domain" description="Laminin EGF-like 6" evidence="7">
    <location>
        <begin position="1011"/>
        <end position="1060"/>
    </location>
</feature>
<feature type="domain" description="Laminin EGF-like 7" evidence="7">
    <location>
        <begin position="1061"/>
        <end position="1111"/>
    </location>
</feature>
<feature type="domain" description="Ig-like C2-type 3">
    <location>
        <begin position="1126"/>
        <end position="1222"/>
    </location>
</feature>
<feature type="domain" description="Ig-like C2-type 4">
    <location>
        <begin position="1226"/>
        <end position="1311"/>
    </location>
</feature>
<feature type="domain" description="Ig-like C2-type 5">
    <location>
        <begin position="1319"/>
        <end position="1401"/>
    </location>
</feature>
<feature type="domain" description="Ig-like C2-type 6">
    <location>
        <begin position="1410"/>
        <end position="1499"/>
    </location>
</feature>
<feature type="domain" description="Ig-like C2-type 7">
    <location>
        <begin position="1503"/>
        <end position="1585"/>
    </location>
</feature>
<feature type="domain" description="Ig-like C2-type 8">
    <location>
        <begin position="1588"/>
        <end position="1680"/>
    </location>
</feature>
<feature type="domain" description="Ig-like C2-type 9">
    <location>
        <begin position="1690"/>
        <end position="1785"/>
    </location>
</feature>
<feature type="domain" description="Ig-like C2-type 10">
    <location>
        <begin position="1793"/>
        <end position="1878"/>
    </location>
</feature>
<feature type="domain" description="Ig-like C2-type 11">
    <location>
        <begin position="1886"/>
        <end position="1970"/>
    </location>
</feature>
<feature type="domain" description="Ig-like C2-type 12">
    <location>
        <begin position="1973"/>
        <end position="2069"/>
    </location>
</feature>
<feature type="domain" description="Ig-like C2-type 13">
    <location>
        <begin position="2073"/>
        <end position="2163"/>
    </location>
</feature>
<feature type="domain" description="Ig-like C2-type 14">
    <location>
        <begin position="2173"/>
        <end position="2260"/>
    </location>
</feature>
<feature type="domain" description="Ig-like C2-type 15">
    <location>
        <begin position="2263"/>
        <end position="2343"/>
    </location>
</feature>
<feature type="domain" description="Ig-like C2-type 16">
    <location>
        <begin position="2349"/>
        <end position="2435"/>
    </location>
</feature>
<feature type="domain" description="Ig-like C2-type 17">
    <location>
        <begin position="2446"/>
        <end position="2530"/>
    </location>
</feature>
<feature type="domain" description="Laminin G-like 1" evidence="4">
    <location>
        <begin position="2532"/>
        <end position="2713"/>
    </location>
</feature>
<feature type="domain" description="Laminin G-like 2" evidence="4">
    <location>
        <begin position="2793"/>
        <end position="2960"/>
    </location>
</feature>
<feature type="domain" description="Laminin G-like 3" evidence="4">
    <location>
        <begin position="3180"/>
        <end position="3359"/>
    </location>
</feature>
<feature type="region of interest" description="Disordered" evidence="8">
    <location>
        <begin position="364"/>
        <end position="385"/>
    </location>
</feature>
<feature type="region of interest" description="Disordered" evidence="8">
    <location>
        <begin position="1388"/>
        <end position="1426"/>
    </location>
</feature>
<feature type="region of interest" description="Disordered" evidence="8">
    <location>
        <begin position="1478"/>
        <end position="1497"/>
    </location>
</feature>
<feature type="region of interest" description="Disordered" evidence="8">
    <location>
        <begin position="1773"/>
        <end position="1792"/>
    </location>
</feature>
<feature type="region of interest" description="Disordered" evidence="8">
    <location>
        <begin position="1880"/>
        <end position="1918"/>
    </location>
</feature>
<feature type="region of interest" description="Disordered" evidence="8">
    <location>
        <begin position="2952"/>
        <end position="3124"/>
    </location>
</feature>
<feature type="compositionally biased region" description="Pro residues" evidence="8">
    <location>
        <begin position="369"/>
        <end position="378"/>
    </location>
</feature>
<feature type="compositionally biased region" description="Polar residues" evidence="8">
    <location>
        <begin position="1388"/>
        <end position="1400"/>
    </location>
</feature>
<feature type="compositionally biased region" description="Polar residues" evidence="8">
    <location>
        <begin position="1481"/>
        <end position="1497"/>
    </location>
</feature>
<feature type="compositionally biased region" description="Polar residues" evidence="8">
    <location>
        <begin position="1776"/>
        <end position="1788"/>
    </location>
</feature>
<feature type="compositionally biased region" description="Polar residues" evidence="8">
    <location>
        <begin position="1907"/>
        <end position="1918"/>
    </location>
</feature>
<feature type="compositionally biased region" description="Low complexity" evidence="8">
    <location>
        <begin position="2952"/>
        <end position="2963"/>
    </location>
</feature>
<feature type="compositionally biased region" description="Acidic residues" evidence="8">
    <location>
        <begin position="2979"/>
        <end position="2990"/>
    </location>
</feature>
<feature type="compositionally biased region" description="Acidic residues" evidence="8">
    <location>
        <begin position="2999"/>
        <end position="3010"/>
    </location>
</feature>
<feature type="compositionally biased region" description="Low complexity" evidence="8">
    <location>
        <begin position="3011"/>
        <end position="3033"/>
    </location>
</feature>
<feature type="compositionally biased region" description="Basic and acidic residues" evidence="8">
    <location>
        <begin position="3034"/>
        <end position="3044"/>
    </location>
</feature>
<feature type="compositionally biased region" description="Low complexity" evidence="8">
    <location>
        <begin position="3049"/>
        <end position="3079"/>
    </location>
</feature>
<feature type="compositionally biased region" description="Acidic residues" evidence="8">
    <location>
        <begin position="3081"/>
        <end position="3094"/>
    </location>
</feature>
<feature type="glycosylation site" description="N-linked (GlcNAc...) asparagine" evidence="11 14">
    <location>
        <position position="1422"/>
    </location>
</feature>
<feature type="glycosylation site" description="N-linked (GlcNAc...) asparagine" evidence="1">
    <location>
        <position position="2476"/>
    </location>
</feature>
<feature type="glycosylation site" description="N-linked (GlcNAc...) asparagine" evidence="1">
    <location>
        <position position="2950"/>
    </location>
</feature>
<feature type="glycosylation site" description="N-linked (GlcNAc...) asparagine" evidence="1">
    <location>
        <position position="3143"/>
    </location>
</feature>
<feature type="glycosylation site" description="N-linked (GlcNAc...) asparagine" evidence="1">
    <location>
        <position position="3156"/>
    </location>
</feature>
<feature type="disulfide bond" evidence="3">
    <location>
        <begin position="66"/>
        <end position="114"/>
    </location>
</feature>
<feature type="disulfide bond" evidence="5">
    <location>
        <begin position="149"/>
        <end position="161"/>
    </location>
</feature>
<feature type="disulfide bond" evidence="5">
    <location>
        <begin position="156"/>
        <end position="174"/>
    </location>
</feature>
<feature type="disulfide bond" evidence="5">
    <location>
        <begin position="168"/>
        <end position="183"/>
    </location>
</feature>
<feature type="disulfide bond" evidence="5">
    <location>
        <begin position="190"/>
        <end position="202"/>
    </location>
</feature>
<feature type="disulfide bond" evidence="5">
    <location>
        <begin position="197"/>
        <end position="215"/>
    </location>
</feature>
<feature type="disulfide bond" evidence="5">
    <location>
        <begin position="209"/>
        <end position="224"/>
    </location>
</feature>
<feature type="disulfide bond" evidence="5">
    <location>
        <begin position="233"/>
        <end position="246"/>
    </location>
</feature>
<feature type="disulfide bond" evidence="5">
    <location>
        <begin position="240"/>
        <end position="259"/>
    </location>
</feature>
<feature type="disulfide bond" evidence="5">
    <location>
        <begin position="253"/>
        <end position="268"/>
    </location>
</feature>
<feature type="disulfide bond" evidence="3">
    <location>
        <begin position="293"/>
        <end position="344"/>
    </location>
</feature>
<feature type="disulfide bond" evidence="7">
    <location>
        <begin position="384"/>
        <end position="400"/>
    </location>
</feature>
<feature type="disulfide bond" evidence="7">
    <location>
        <begin position="402"/>
        <end position="411"/>
    </location>
</feature>
<feature type="disulfide bond" evidence="7">
    <location>
        <begin position="414"/>
        <end position="429"/>
    </location>
</feature>
<feature type="disulfide bond" evidence="7">
    <location>
        <begin position="634"/>
        <end position="648"/>
    </location>
</feature>
<feature type="disulfide bond" evidence="7">
    <location>
        <begin position="636"/>
        <end position="689"/>
    </location>
</feature>
<feature type="disulfide bond" evidence="7">
    <location>
        <begin position="691"/>
        <end position="700"/>
    </location>
</feature>
<feature type="disulfide bond" evidence="7">
    <location>
        <begin position="703"/>
        <end position="718"/>
    </location>
</feature>
<feature type="disulfide bond" evidence="7">
    <location>
        <begin position="955"/>
        <end position="964"/>
    </location>
</feature>
<feature type="disulfide bond" evidence="7">
    <location>
        <begin position="957"/>
        <end position="971"/>
    </location>
</feature>
<feature type="disulfide bond" evidence="7">
    <location>
        <begin position="974"/>
        <end position="983"/>
    </location>
</feature>
<feature type="disulfide bond" evidence="7">
    <location>
        <begin position="986"/>
        <end position="1002"/>
    </location>
</feature>
<feature type="disulfide bond" evidence="7">
    <location>
        <begin position="1011"/>
        <end position="1021"/>
    </location>
</feature>
<feature type="disulfide bond" evidence="7">
    <location>
        <begin position="1013"/>
        <end position="1027"/>
    </location>
</feature>
<feature type="disulfide bond" evidence="7">
    <location>
        <begin position="1030"/>
        <end position="1039"/>
    </location>
</feature>
<feature type="disulfide bond" evidence="7">
    <location>
        <begin position="1042"/>
        <end position="1058"/>
    </location>
</feature>
<feature type="disulfide bond" evidence="7">
    <location>
        <begin position="1061"/>
        <end position="1069"/>
    </location>
</feature>
<feature type="disulfide bond" evidence="7">
    <location>
        <begin position="1063"/>
        <end position="1079"/>
    </location>
</feature>
<feature type="disulfide bond" evidence="7">
    <location>
        <begin position="1082"/>
        <end position="1091"/>
    </location>
</feature>
<feature type="disulfide bond" evidence="7">
    <location>
        <begin position="1094"/>
        <end position="1109"/>
    </location>
</feature>
<feature type="disulfide bond" evidence="3">
    <location>
        <begin position="1152"/>
        <end position="1200"/>
    </location>
</feature>
<feature type="disulfide bond" evidence="3">
    <location>
        <begin position="1247"/>
        <end position="1294"/>
    </location>
</feature>
<feature type="disulfide bond" evidence="3">
    <location>
        <begin position="1338"/>
        <end position="1384"/>
    </location>
</feature>
<feature type="disulfide bond" evidence="3">
    <location>
        <begin position="1435"/>
        <end position="1481"/>
    </location>
</feature>
<feature type="disulfide bond" evidence="3">
    <location>
        <begin position="1527"/>
        <end position="1573"/>
    </location>
</feature>
<feature type="disulfide bond" evidence="3">
    <location>
        <begin position="1618"/>
        <end position="1663"/>
    </location>
</feature>
<feature type="disulfide bond" evidence="3">
    <location>
        <begin position="1719"/>
        <end position="1767"/>
    </location>
</feature>
<feature type="disulfide bond" evidence="3">
    <location>
        <begin position="1814"/>
        <end position="1861"/>
    </location>
</feature>
<feature type="disulfide bond" evidence="3">
    <location>
        <begin position="1907"/>
        <end position="1954"/>
    </location>
</feature>
<feature type="disulfide bond" evidence="3">
    <location>
        <begin position="1998"/>
        <end position="2053"/>
    </location>
</feature>
<feature type="disulfide bond" evidence="3">
    <location>
        <begin position="2099"/>
        <end position="2147"/>
    </location>
</feature>
<feature type="disulfide bond" evidence="3">
    <location>
        <begin position="2195"/>
        <end position="2242"/>
    </location>
</feature>
<feature type="disulfide bond" evidence="3">
    <location>
        <begin position="2284"/>
        <end position="2329"/>
    </location>
</feature>
<feature type="disulfide bond" evidence="3">
    <location>
        <begin position="2374"/>
        <end position="2420"/>
    </location>
</feature>
<feature type="disulfide bond" evidence="3">
    <location>
        <begin position="2467"/>
        <end position="2514"/>
    </location>
</feature>
<feature type="disulfide bond" evidence="2">
    <location>
        <begin position="2713"/>
        <end position="2725"/>
    </location>
</feature>
<feature type="disulfide bond" evidence="2">
    <location>
        <begin position="2719"/>
        <end position="2736"/>
    </location>
</feature>
<feature type="disulfide bond" evidence="2">
    <location>
        <begin position="2738"/>
        <end position="2747"/>
    </location>
</feature>
<feature type="disulfide bond" evidence="2">
    <location>
        <begin position="2754"/>
        <end position="2764"/>
    </location>
</feature>
<feature type="disulfide bond" evidence="2">
    <location>
        <begin position="2759"/>
        <end position="2773"/>
    </location>
</feature>
<feature type="disulfide bond" evidence="2">
    <location>
        <begin position="2775"/>
        <end position="2784"/>
    </location>
</feature>
<feature type="disulfide bond" evidence="4">
    <location>
        <begin position="2935"/>
        <end position="2960"/>
    </location>
</feature>
<feature type="disulfide bond" evidence="2">
    <location>
        <begin position="3141"/>
        <end position="3152"/>
    </location>
</feature>
<feature type="disulfide bond" evidence="2">
    <location>
        <begin position="3146"/>
        <end position="3162"/>
    </location>
</feature>
<feature type="disulfide bond" evidence="2">
    <location>
        <begin position="3164"/>
        <end position="3173"/>
    </location>
</feature>
<feature type="disulfide bond" evidence="4">
    <location>
        <begin position="3333"/>
        <end position="3359"/>
    </location>
</feature>
<feature type="splice variant" id="VSP_020104" description="In isoform f." evidence="20">
    <original>VLRVRIMEPKRQIALPGDRVHWICQVTGYTTEKIHVEWTKVGEMSLPPNAKAYDGYLVLKGVEAENAGQYRCTATTITQYATDDALLTISKRIS</original>
    <variation>G</variation>
    <location>
        <begin position="1129"/>
        <end position="1222"/>
    </location>
</feature>
<feature type="splice variant" id="VSP_007191" description="In isoform b." evidence="20">
    <original>VLRVRIMEPKRQIALPGDRVHWICQVTGYTTE</original>
    <variation>GDFARNSPSQNSSGQRRHRRRRIRVRSRFYHH</variation>
    <location>
        <begin position="1129"/>
        <end position="1160"/>
    </location>
</feature>
<feature type="splice variant" id="VSP_007192" description="In isoform b." evidence="20">
    <location>
        <begin position="1161"/>
        <end position="3375"/>
    </location>
</feature>
<feature type="splice variant" id="VSP_007193" description="In isoform c." evidence="20">
    <original>R</original>
    <variation>H</variation>
    <location>
        <position position="1695"/>
    </location>
</feature>
<feature type="splice variant" id="VSP_007194" description="In isoform c." evidence="20">
    <location>
        <begin position="1696"/>
        <end position="1882"/>
    </location>
</feature>
<feature type="splice variant" id="VSP_007195" description="In isoform a, isoform c and isoform f." evidence="20">
    <original>QDQVTFTVADSLPVVYTVGQPAYLSCIGKTETKPNQSVVWT</original>
    <variation>RKRKHLGNRRGRRLRHRRRNAQNGPLSRKTRTTTKLFGSWF</variation>
    <location>
        <begin position="2442"/>
        <end position="2482"/>
    </location>
</feature>
<feature type="splice variant" id="VSP_007196" description="In isoform a and isoform c." evidence="20">
    <location>
        <begin position="2483"/>
        <end position="3375"/>
    </location>
</feature>
<feature type="splice variant" id="VSP_020105" description="In isoform f." evidence="20">
    <location>
        <begin position="2485"/>
        <end position="3375"/>
    </location>
</feature>
<feature type="sequence conflict" description="In Ref. 1; AAA28156." evidence="20" ref="1">
    <location>
        <position position="512"/>
    </location>
</feature>
<feature type="sequence conflict" description="In Ref. 1; AAA28156." evidence="20" ref="1">
    <original>R</original>
    <variation>P</variation>
    <location>
        <position position="547"/>
    </location>
</feature>
<organism>
    <name type="scientific">Caenorhabditis elegans</name>
    <dbReference type="NCBI Taxonomy" id="6239"/>
    <lineage>
        <taxon>Eukaryota</taxon>
        <taxon>Metazoa</taxon>
        <taxon>Ecdysozoa</taxon>
        <taxon>Nematoda</taxon>
        <taxon>Chromadorea</taxon>
        <taxon>Rhabditida</taxon>
        <taxon>Rhabditina</taxon>
        <taxon>Rhabditomorpha</taxon>
        <taxon>Rhabditoidea</taxon>
        <taxon>Rhabditidae</taxon>
        <taxon>Peloderinae</taxon>
        <taxon>Caenorhabditis</taxon>
    </lineage>
</organism>
<proteinExistence type="evidence at protein level"/>
<keyword id="KW-0025">Alternative splicing</keyword>
<keyword id="KW-0084">Basement membrane</keyword>
<keyword id="KW-0963">Cytoplasm</keyword>
<keyword id="KW-1015">Disulfide bond</keyword>
<keyword id="KW-0272">Extracellular matrix</keyword>
<keyword id="KW-0325">Glycoprotein</keyword>
<keyword id="KW-0393">Immunoglobulin domain</keyword>
<keyword id="KW-0424">Laminin EGF-like domain</keyword>
<keyword id="KW-0654">Proteoglycan</keyword>
<keyword id="KW-1185">Reference proteome</keyword>
<keyword id="KW-0677">Repeat</keyword>
<keyword id="KW-0964">Secreted</keyword>
<keyword id="KW-0732">Signal</keyword>
<sequence length="3375" mass="369052">MKRSSTVLAALLALLLVATNDAARHRKYRQTYQDIDSDDDDTSDVQITVFPSEKEVRDGRDVSFECRARTSDNSVYPTVRWARVGGPLPSSAHDSGGRLTINPVQLSDAGTYICVSDYNGNTVEARATLSVVSYGPQEVSNGLRQAGQCMADEKACGNNECVKNDYVCDGEPDCRDRSDEANCPAISRTCEPNEFKCNNNKCVQKMWLCDGDDDCGDNSDELNCNAKPSSSDCKPTEFQCHDRRQCVPSSFHCDGTNDCHDGSDEVGCVQPTVVDPPQTNLQVPRGTTFSLTCKAVAVPEPYINWRLNWGPVCEPPRCLQTSEGGYGTLTIHDAQPVDQGAYTCEAINVKGRVLATPDCIVRVVDDPRPQPPQPPTAPPQRASCDTRGAVTPYPNNYGTCECKSQVTGPNCDQCKPGAFHLSEKSPEGCLKCFCFGVSNDCRSSGHYRTKDRLMFAGDAEGVTISDIEERTIDRNTPFSFFKTGYLTFDGTTDGVAKYWRLPQRFLGDKVTAYGGKMEFEIEFSGSGHHSSEPMVVLKGNQNILVHRVRNQEHVLRSDSPVRITVETYETNYEQLNGAAATREDLLMVLADLDAFLIRATHVAHQTSTSLGDVSWEIAVDRYTPDGLALEVEQCVCPPGYLGTSCEDCAPGYERSGYGPYLGTCVPIQPRHQQCGPGAVAPTAPAQGQCQCKASVIGPNCDRCAPNSFGLAPTNPQGCIPCFCSGVTQQCSASSYRRTSVSIDYARGDRDQLELTTSDSRQPYSPQTRAELSGQAIEFRSFEEARGQTLYWKLPEKFLGDKVTSYGGTLEYTFKFSGNGNSDQSADVILRGNDIALQYKHREPFYADRENKVQIKIIETSWQRVDGQQATREHLLMTLADLDTLLIKSTYNDDCTDSQLLSANLEFAEPYGQGLTAAEVEQCICPPGYVGTSCEDCAPGYSRTGGGLYLGLCEKCECNGHASQCDKEYGYCLDCQHNTEGDQCERCKPGFVGDARRGTPNDCQPEATRAPCHCNNHSPRGCDSFGRCLLCEHNTEGTHCERCKKGYYGDATKGSPYDCTPCPCPGASDCYLDNEGQVACRICPAGLQGRLCNECAPGYTRSNKPAGRVCEPIGQVTNEDITFVQKPHEVLRVRIMEPKRQIALPGDRVHWICQVTGYTTEKIHVEWTKVGEMSLPPNAKAYDGYLVLKGVEAENAGQYRCTATTITQYATDDALLTISKRISGRPPQPVIDPPHLVVNEGEPAAFRCWVPGIPDCQITWHREQLGGPLPHGVYQTGNALKIPQSQLHHAGRYICSAANQYGTGQSPPAVLEVKKPVIPPKVDPIRQTVDRDQPARFKCWVPGNSNVQLRWSRPGGAPLPSGVQEQQGILHIPRASDQEVGQYVCTATDPSDNTPLQSEPVQLNIRDPAPPQRGAAPQIDPPNQTVNVNDPAQFRCWVPGQPRAQLKWSRKDGRPLPNGILERDGFLRIDKSQLHDAGEYECTSTEPDGSTQLSPPARLNVNQPQAIQPQVDPPVQTVNEGEPSRIRCWVPGHPNIQLQFVKRGRRPLPAHARFSQGNLEIPRTLKSDEDEYICIATDPTTNRPVESNPARVIVKSPIRPIIDPAEQTVPEGSPFKIRCYVPGHPSVQLTFRRVSGQLNEDADENNGLLAVQRAELTDEGDYICTARDPDTGAPIDSTPATVHVTNAAAPPQVEARPPQHPVITPQTQTIPEGDPARIQCTVPGNPSAAQHLSFERVDGKGLPFGSSDDRGVLTIPSTQLQDAGEYVCLYSPENSPPVKTNPSTLNVTPEGTPPRPVATPPLLSVAPGSPARFNCVAHSDTPARIRWGFREENGPLPEHVNQDGDDIVISEAGDRNVGEYVCSATNDFGTGVADPVRLEVTEDQEPPTAVVEPRTWNGKPGERHQFRCITTGSPTPKITWTGPNGSPLPHDVTPLEPNILDFSNGRSELNGDYTCTASNPIGEASDHGNVNIGPSLTVKTNPPGPKLIVTVGEPLQVKCEAFGAPGDPEPEVEWLHDPGPERGDLPDDFKPVTISEQFIRHPNVGLGNAGVYTCKGSSAHATATKNIYIEVVEPSRIATVSILGGSSQWFDQGEKGELICTATGSSLVDRLEWEKVDDQLPTDVEEHNEPGLLHFPSFKNSYAGEYRCNGYRNNEIIASAAVHVHSSANADDEPKVEIEPPRVRVVSQGDNIVLKCSVQGAENGEHFKWALLRGGSLVRQLGTEPTLEITKADPSNDFGVYRCNVEDNNGLVIGSAFTAVSVGQQDKSHAQIVKFDDKSDASFTCPIYSVPGSKVDWTYENGDLPSKAVPNGNKIEIKEFDDASAGTYVCKVSFDGNVVEGFVTAQMFVPDTIIQVLLEVSSESPQIGDRAWFDCKVTGDPSAVISWTKEGNDDLPPNAQVTGGRLLFTDLKEDNAGVYRCVAKTKAGPLQTRTVLNVGSGKQDQVTFTVADSLPVVYTVGQPAYLSCIGKTETKPNQSVVWTKEEGDLPSGSRVEQGVLMLPSVHRDDEGSYTCEIVKEENPVFSTVDLQIDDFIPVIDGEPIELPPLSDEEIVNLDIEITLNTANPKGIIFETKRINSGDLLATPYDTIHHEAKITDYGTVLYEFDIGNGRQIVETTNPINPNEWNVIKIKNDKNQVTIQLNDESATIRQHTNPLPSLSTGVNRPVFIGGRHEPTNEANDFRGIISQVVLSGHNVGLGDARIPSSVVKYDACASTNLCLNGANCRNANNHHGFSCECAEEFHGEYCQWRSNSCHDESCNTGICLDNEESWQCVCPLGTTGLRCEEKTEIPQPLGFTSDTSFLAVKRPVKFESIKMKLRPQADSDEHILMYFASDYGSNTKQYTSLSLIANQVVLTVRRPDKEVQKIRSETLEAGELIDVAVRQAGNALVMTVDGNQVSTIETDTLKPGTEIFIGGLPPGLNSPDDVVEQSFQGCVYEILINSQDVDLQNLSSSGDISSCEESQFPVEEDDTTTTTTTEEPEAVIEEPTTEEPTTTEEPITEEPTEEPTTTEEPTTTEEPTTTTEEPTTTTTEEPYHIYETSRDDDPEIIIPVETTTTSTTTTSTTEEPEAEPALVLPTDPVEENDVSDEEEEISTISTVSPDNGLDSDSDYSEGTLPPDSSSEEIVVGDVYSTQEPNNICANSTCGMNGQCVPRNMTHYTCECKLYYDGPTCSLFKPIEHAARFDGDAFIELSSDEFPHLTSEKDEIVAFKFKTEQQNGVLLWQGQRPTVQQMEDYISVGIVNGHLHFSYELGGGAAHLISEERVDDGKEHSVRFERKGREGQMRIDNYREVDGRSTGILAMLNVDGNIFVGGVPDISKATGGLFSNNFVGCIADVELNGVKLDLMATAIDGKNVKPCDEWMHRKRWLYRRRVR</sequence>
<reference key="1">
    <citation type="journal article" date="1993" name="Genes Dev.">
        <title>Products of the unc-52 gene in Caenorhabditis elegans are homologous to the core protein of the mammalian basement membrane heparan sulfate proteoglycan.</title>
        <authorList>
            <person name="Rogalski T.M."/>
            <person name="Williams B.D."/>
            <person name="Mullen G.P."/>
            <person name="Moerman D.G."/>
        </authorList>
    </citation>
    <scope>NUCLEOTIDE SEQUENCE [GENOMIC DNA] (ISOFORM A)</scope>
    <scope>FUNCTION</scope>
    <scope>ALTERNATIVE SPLICING</scope>
    <scope>TISSUE SPECIFICITY</scope>
</reference>
<reference key="2">
    <citation type="journal article" date="1998" name="Science">
        <title>Genome sequence of the nematode C. elegans: a platform for investigating biology.</title>
        <authorList>
            <consortium name="The C. elegans sequencing consortium"/>
        </authorList>
    </citation>
    <scope>NUCLEOTIDE SEQUENCE [LARGE SCALE GENOMIC DNA]</scope>
    <source>
        <strain>Bristol N2</strain>
    </source>
</reference>
<reference key="3">
    <citation type="journal article" date="1999" name="Mol. Biol. Cell">
        <title>Complex patterns of alternative splicing mediate the spatial and temporal distribution of perlecan/UNC-52 in Caenorhabditis elegans.</title>
        <authorList>
            <person name="Mullen G.P."/>
            <person name="Rogalski T.M."/>
            <person name="Bush J.A."/>
            <person name="Gorji P.R."/>
            <person name="Moerman D.G."/>
        </authorList>
    </citation>
    <scope>NUCLEOTIDE SEQUENCE [MRNA] OF 2451-3375 (ISOFORMS C/E)</scope>
    <scope>ALTERNATIVE SPLICING</scope>
    <scope>SUBCELLULAR LOCATION</scope>
    <scope>TISSUE SPECIFICITY</scope>
    <source>
        <strain>Bristol N2</strain>
    </source>
</reference>
<reference key="4">
    <citation type="journal article" date="2001" name="Mol. Cell. Biol.">
        <title>Analysis of smu-1, a gene that regulates the alternative splicing of unc-52 pre-mRNA in Caenorhabditis elegans.</title>
        <authorList>
            <person name="Spike C.A."/>
            <person name="Shaw J.E."/>
            <person name="Herman R.K."/>
        </authorList>
    </citation>
    <scope>ALTERNATIVE SPLICING</scope>
    <scope>FUNCTION</scope>
</reference>
<reference key="5">
    <citation type="journal article" date="2003" name="Nat. Biotechnol.">
        <title>Lectin affinity capture, isotope-coded tagging and mass spectrometry to identify N-linked glycoproteins.</title>
        <authorList>
            <person name="Kaji H."/>
            <person name="Saito H."/>
            <person name="Yamauchi Y."/>
            <person name="Shinkawa T."/>
            <person name="Taoka M."/>
            <person name="Hirabayashi J."/>
            <person name="Kasai K."/>
            <person name="Takahashi N."/>
            <person name="Isobe T."/>
        </authorList>
    </citation>
    <scope>GLYCOSYLATION [LARGE SCALE ANALYSIS] AT ASN-1422</scope>
    <scope>IDENTIFICATION BY MASS SPECTROMETRY</scope>
    <source>
        <strain>Bristol N2</strain>
    </source>
</reference>
<reference key="6">
    <citation type="journal article" date="2006" name="Development">
        <title>FGF negatively regulates muscle membrane extension in Caenorhabditis elegans.</title>
        <authorList>
            <person name="Dixon S.J."/>
            <person name="Alexander M."/>
            <person name="Fernandes R."/>
            <person name="Ricker N."/>
            <person name="Roy P.J."/>
        </authorList>
    </citation>
    <scope>FUNCTION</scope>
    <scope>DISRUPTION PHENOTYPE</scope>
</reference>
<reference key="7">
    <citation type="journal article" date="2007" name="Dev. Dyn.">
        <title>Structural components of the nonstriated contractile apparatuses in the Caenorhabditis elegans gonadal myoepithelial sheath and their essential roles for ovulation.</title>
        <authorList>
            <person name="Ono K."/>
            <person name="Yu R."/>
            <person name="Ono S."/>
        </authorList>
    </citation>
    <scope>FUNCTION</scope>
    <scope>SUBCELLULAR LOCATION</scope>
    <scope>TISSUE SPECIFICITY</scope>
    <scope>DISRUPTION PHENOTYPE</scope>
</reference>
<reference key="8">
    <citation type="journal article" date="2007" name="Mol. Cell. Proteomics">
        <title>Proteomics reveals N-linked glycoprotein diversity in Caenorhabditis elegans and suggests an atypical translocation mechanism for integral membrane proteins.</title>
        <authorList>
            <person name="Kaji H."/>
            <person name="Kamiie J."/>
            <person name="Kawakami H."/>
            <person name="Kido K."/>
            <person name="Yamauchi Y."/>
            <person name="Shinkawa T."/>
            <person name="Taoka M."/>
            <person name="Takahashi N."/>
            <person name="Isobe T."/>
        </authorList>
    </citation>
    <scope>GLYCOSYLATION [LARGE SCALE ANALYSIS] AT ASN-1422</scope>
    <scope>IDENTIFICATION BY MASS SPECTROMETRY</scope>
    <source>
        <strain>Bristol N2</strain>
    </source>
</reference>
<reference key="9">
    <citation type="journal article" date="2012" name="PLoS Genet.">
        <title>Calpains mediate integrin attachment complex maintenance of adult muscle in Caenorhabditis elegans.</title>
        <authorList>
            <person name="Etheridge T."/>
            <person name="Oczypok E.A."/>
            <person name="Lehmann S."/>
            <person name="Fields B.D."/>
            <person name="Shephard F."/>
            <person name="Jacobson L.A."/>
            <person name="Szewczyk N.J."/>
        </authorList>
    </citation>
    <scope>FUNCTION</scope>
    <scope>COMPONENT OF AN INTEGRIN CONTAINING ATTACHMENT COMPLEX</scope>
    <scope>DISRUPTION PHENOTYPE</scope>
</reference>
<reference evidence="20" key="10">
    <citation type="journal article" date="2022" name="Science">
        <title>Sex- and age-dependent genetics of longevity in a heterogeneous mouse population.</title>
        <authorList>
            <person name="Bou Sleiman M."/>
            <person name="Roy S."/>
            <person name="Gao A.W."/>
            <person name="Sadler M.C."/>
            <person name="von Alvensleben G.V.G."/>
            <person name="Li H."/>
            <person name="Sen S."/>
            <person name="Harrison D.E."/>
            <person name="Nelson J.F."/>
            <person name="Strong R."/>
            <person name="Miller R.A."/>
            <person name="Kutalik Z."/>
            <person name="Williams R.W."/>
            <person name="Auwerx J."/>
        </authorList>
    </citation>
    <scope>FUNCTION</scope>
    <scope>DISRUPTION PHENOTYPE</scope>
</reference>
<name>UNC52_CAEEL</name>
<evidence type="ECO:0000255" key="1"/>
<evidence type="ECO:0000255" key="2">
    <source>
        <dbReference type="PROSITE-ProRule" id="PRU00076"/>
    </source>
</evidence>
<evidence type="ECO:0000255" key="3">
    <source>
        <dbReference type="PROSITE-ProRule" id="PRU00114"/>
    </source>
</evidence>
<evidence type="ECO:0000255" key="4">
    <source>
        <dbReference type="PROSITE-ProRule" id="PRU00122"/>
    </source>
</evidence>
<evidence type="ECO:0000255" key="5">
    <source>
        <dbReference type="PROSITE-ProRule" id="PRU00124"/>
    </source>
</evidence>
<evidence type="ECO:0000255" key="6">
    <source>
        <dbReference type="PROSITE-ProRule" id="PRU00458"/>
    </source>
</evidence>
<evidence type="ECO:0000255" key="7">
    <source>
        <dbReference type="PROSITE-ProRule" id="PRU00460"/>
    </source>
</evidence>
<evidence type="ECO:0000256" key="8">
    <source>
        <dbReference type="SAM" id="MobiDB-lite"/>
    </source>
</evidence>
<evidence type="ECO:0000269" key="9">
    <source>
    </source>
</evidence>
<evidence type="ECO:0000269" key="10">
    <source>
    </source>
</evidence>
<evidence type="ECO:0000269" key="11">
    <source>
    </source>
</evidence>
<evidence type="ECO:0000269" key="12">
    <source>
    </source>
</evidence>
<evidence type="ECO:0000269" key="13">
    <source>
    </source>
</evidence>
<evidence type="ECO:0000269" key="14">
    <source>
    </source>
</evidence>
<evidence type="ECO:0000269" key="15">
    <source>
    </source>
</evidence>
<evidence type="ECO:0000269" key="16">
    <source>
    </source>
</evidence>
<evidence type="ECO:0000269" key="17">
    <source>
    </source>
</evidence>
<evidence type="ECO:0000303" key="18">
    <source>
    </source>
</evidence>
<evidence type="ECO:0000303" key="19">
    <source>
    </source>
</evidence>
<evidence type="ECO:0000305" key="20"/>
<evidence type="ECO:0000305" key="21">
    <source>
    </source>
</evidence>
<evidence type="ECO:0000312" key="22">
    <source>
        <dbReference type="WormBase" id="ZC101.2a"/>
    </source>
</evidence>
<evidence type="ECO:0000312" key="23">
    <source>
        <dbReference type="WormBase" id="ZC101.2b"/>
    </source>
</evidence>
<evidence type="ECO:0000312" key="24">
    <source>
        <dbReference type="WormBase" id="ZC101.2c"/>
    </source>
</evidence>
<evidence type="ECO:0000312" key="25">
    <source>
        <dbReference type="WormBase" id="ZC101.2e"/>
    </source>
</evidence>
<evidence type="ECO:0000312" key="26">
    <source>
        <dbReference type="WormBase" id="ZC101.2f"/>
    </source>
</evidence>
<protein>
    <recommendedName>
        <fullName evidence="19">Basement membrane proteoglycan</fullName>
    </recommendedName>
    <alternativeName>
        <fullName evidence="18">Perlecan homolog</fullName>
    </alternativeName>
    <alternativeName>
        <fullName>Uncoordinated protein 52</fullName>
        <shortName evidence="18 19">Protein unc-52</shortName>
    </alternativeName>
</protein>
<dbReference type="EMBL" id="L13458">
    <property type="protein sequence ID" value="AAA28156.1"/>
    <property type="molecule type" value="Genomic_DNA"/>
</dbReference>
<dbReference type="EMBL" id="BX284602">
    <property type="protein sequence ID" value="CAB07704.1"/>
    <property type="molecule type" value="Genomic_DNA"/>
</dbReference>
<dbReference type="EMBL" id="BX284602">
    <property type="protein sequence ID" value="CAB07706.1"/>
    <property type="molecule type" value="Genomic_DNA"/>
</dbReference>
<dbReference type="EMBL" id="Z93375">
    <property type="protein sequence ID" value="CAB07706.1"/>
    <property type="status" value="JOINED"/>
    <property type="molecule type" value="Genomic_DNA"/>
</dbReference>
<dbReference type="EMBL" id="BX284602">
    <property type="protein sequence ID" value="CAB07707.1"/>
    <property type="molecule type" value="Genomic_DNA"/>
</dbReference>
<dbReference type="EMBL" id="Z93375">
    <property type="protein sequence ID" value="CAB07707.1"/>
    <property type="status" value="JOINED"/>
    <property type="molecule type" value="Genomic_DNA"/>
</dbReference>
<dbReference type="EMBL" id="BX284602">
    <property type="protein sequence ID" value="CAB07708.1"/>
    <property type="molecule type" value="Genomic_DNA"/>
</dbReference>
<dbReference type="EMBL" id="Z93375">
    <property type="protein sequence ID" value="CAB07708.1"/>
    <property type="status" value="JOINED"/>
    <property type="molecule type" value="Genomic_DNA"/>
</dbReference>
<dbReference type="EMBL" id="BX284602">
    <property type="protein sequence ID" value="CAH04744.1"/>
    <property type="molecule type" value="Genomic_DNA"/>
</dbReference>
<dbReference type="EMBL" id="Z93375">
    <property type="protein sequence ID" value="CAH04744.1"/>
    <property type="status" value="JOINED"/>
    <property type="molecule type" value="Genomic_DNA"/>
</dbReference>
<dbReference type="EMBL" id="AF132883">
    <property type="protein sequence ID" value="AAD25092.1"/>
    <property type="molecule type" value="mRNA"/>
</dbReference>
<dbReference type="PIR" id="C88369">
    <property type="entry name" value="C88369"/>
</dbReference>
<dbReference type="PIR" id="F88369">
    <property type="entry name" value="F88369"/>
</dbReference>
<dbReference type="PIR" id="T19821">
    <property type="entry name" value="T19821"/>
</dbReference>
<dbReference type="RefSeq" id="NP_001022488.1">
    <property type="nucleotide sequence ID" value="NM_001027317.5"/>
</dbReference>
<dbReference type="RefSeq" id="NP_497044.3">
    <molecule id="Q06561-1"/>
    <property type="nucleotide sequence ID" value="NM_064643.8"/>
</dbReference>
<dbReference type="RefSeq" id="NP_497045.1">
    <molecule id="Q06561-4"/>
    <property type="nucleotide sequence ID" value="NM_064644.6"/>
</dbReference>
<dbReference type="RefSeq" id="NP_497046.1">
    <molecule id="Q06561-2"/>
    <property type="nucleotide sequence ID" value="NM_064645.6"/>
</dbReference>
<dbReference type="RefSeq" id="NP_497047.1">
    <molecule id="Q06561-3"/>
    <property type="nucleotide sequence ID" value="NM_064646.7"/>
</dbReference>
<dbReference type="BioGRID" id="40407">
    <property type="interactions" value="23"/>
</dbReference>
<dbReference type="FunCoup" id="Q06561">
    <property type="interactions" value="274"/>
</dbReference>
<dbReference type="IntAct" id="Q06561">
    <property type="interactions" value="1"/>
</dbReference>
<dbReference type="STRING" id="6239.ZC101.2e.1"/>
<dbReference type="GlyCosmos" id="Q06561">
    <property type="glycosylation" value="5 sites, No reported glycans"/>
</dbReference>
<dbReference type="iPTMnet" id="Q06561"/>
<dbReference type="PaxDb" id="6239-ZC101.2e"/>
<dbReference type="PeptideAtlas" id="Q06561"/>
<dbReference type="EnsemblMetazoa" id="ZC101.2a.1">
    <molecule id="Q06561-2"/>
    <property type="protein sequence ID" value="ZC101.2a.1"/>
    <property type="gene ID" value="WBGene00006787"/>
</dbReference>
<dbReference type="EnsemblMetazoa" id="ZC101.2b.1">
    <molecule id="Q06561-3"/>
    <property type="protein sequence ID" value="ZC101.2b.1"/>
    <property type="gene ID" value="WBGene00006787"/>
</dbReference>
<dbReference type="EnsemblMetazoa" id="ZC101.2c.1">
    <molecule id="Q06561-4"/>
    <property type="protein sequence ID" value="ZC101.2c.1"/>
    <property type="gene ID" value="WBGene00006787"/>
</dbReference>
<dbReference type="EnsemblMetazoa" id="ZC101.2e.1">
    <molecule id="Q06561-1"/>
    <property type="protein sequence ID" value="ZC101.2e.1"/>
    <property type="gene ID" value="WBGene00006787"/>
</dbReference>
<dbReference type="EnsemblMetazoa" id="ZC101.2f.1">
    <property type="protein sequence ID" value="ZC101.2f.1"/>
    <property type="gene ID" value="WBGene00006787"/>
</dbReference>
<dbReference type="GeneID" id="175126"/>
<dbReference type="KEGG" id="cel:CELE_ZC101.2"/>
<dbReference type="UCSC" id="ZC101.2e">
    <molecule id="Q06561-1"/>
    <property type="organism name" value="c. elegans"/>
</dbReference>
<dbReference type="AGR" id="WB:WBGene00006787"/>
<dbReference type="CTD" id="175126"/>
<dbReference type="WormBase" id="ZC101.2a">
    <molecule id="Q06561-2"/>
    <property type="protein sequence ID" value="CE15028"/>
    <property type="gene ID" value="WBGene00006787"/>
    <property type="gene designation" value="unc-52"/>
</dbReference>
<dbReference type="WormBase" id="ZC101.2b">
    <molecule id="Q06561-3"/>
    <property type="protein sequence ID" value="CE15030"/>
    <property type="gene ID" value="WBGene00006787"/>
    <property type="gene designation" value="unc-52"/>
</dbReference>
<dbReference type="WormBase" id="ZC101.2c">
    <molecule id="Q06561-4"/>
    <property type="protein sequence ID" value="CE15034"/>
    <property type="gene ID" value="WBGene00006787"/>
    <property type="gene designation" value="unc-52"/>
</dbReference>
<dbReference type="WormBase" id="ZC101.2e">
    <molecule id="Q06561-1"/>
    <property type="protein sequence ID" value="CE18424"/>
    <property type="gene ID" value="WBGene00006787"/>
    <property type="gene designation" value="unc-52"/>
</dbReference>
<dbReference type="WormBase" id="ZC101.2f">
    <molecule id="Q06561-5"/>
    <property type="protein sequence ID" value="CE37074"/>
    <property type="gene ID" value="WBGene00006787"/>
    <property type="gene designation" value="unc-52"/>
</dbReference>
<dbReference type="eggNOG" id="KOG3509">
    <property type="taxonomic scope" value="Eukaryota"/>
</dbReference>
<dbReference type="HOGENOM" id="CLU_000078_0_0_1"/>
<dbReference type="InParanoid" id="Q06561"/>
<dbReference type="OMA" id="PGHDQSY"/>
<dbReference type="OrthoDB" id="10055367at2759"/>
<dbReference type="PhylomeDB" id="Q06561"/>
<dbReference type="PRO" id="PR:Q06561"/>
<dbReference type="Proteomes" id="UP000001940">
    <property type="component" value="Chromosome II"/>
</dbReference>
<dbReference type="Bgee" id="WBGene00006787">
    <property type="expression patterns" value="Expressed in pharyngeal muscle cell (C elegans) and 3 other cell types or tissues"/>
</dbReference>
<dbReference type="ExpressionAtlas" id="Q06561">
    <property type="expression patterns" value="baseline and differential"/>
</dbReference>
<dbReference type="GO" id="GO:0005604">
    <property type="term" value="C:basement membrane"/>
    <property type="evidence" value="ECO:0000314"/>
    <property type="project" value="UniProtKB"/>
</dbReference>
<dbReference type="GO" id="GO:0031012">
    <property type="term" value="C:extracellular matrix"/>
    <property type="evidence" value="ECO:0000314"/>
    <property type="project" value="UniProtKB"/>
</dbReference>
<dbReference type="GO" id="GO:0005576">
    <property type="term" value="C:extracellular region"/>
    <property type="evidence" value="ECO:0007669"/>
    <property type="project" value="UniProtKB-KW"/>
</dbReference>
<dbReference type="GO" id="GO:0031430">
    <property type="term" value="C:M band"/>
    <property type="evidence" value="ECO:0007669"/>
    <property type="project" value="UniProtKB-SubCell"/>
</dbReference>
<dbReference type="GO" id="GO:0055120">
    <property type="term" value="C:striated muscle dense body"/>
    <property type="evidence" value="ECO:0000314"/>
    <property type="project" value="UniProtKB"/>
</dbReference>
<dbReference type="GO" id="GO:0005509">
    <property type="term" value="F:calcium ion binding"/>
    <property type="evidence" value="ECO:0007669"/>
    <property type="project" value="InterPro"/>
</dbReference>
<dbReference type="GO" id="GO:0005201">
    <property type="term" value="F:extracellular matrix structural constituent"/>
    <property type="evidence" value="ECO:0000315"/>
    <property type="project" value="WormBase"/>
</dbReference>
<dbReference type="GO" id="GO:0016477">
    <property type="term" value="P:cell migration"/>
    <property type="evidence" value="ECO:0000316"/>
    <property type="project" value="WormBase"/>
</dbReference>
<dbReference type="GO" id="GO:0009792">
    <property type="term" value="P:embryo development ending in birth or egg hatching"/>
    <property type="evidence" value="ECO:0000316"/>
    <property type="project" value="WormBase"/>
</dbReference>
<dbReference type="GO" id="GO:0008543">
    <property type="term" value="P:fibroblast growth factor receptor signaling pathway"/>
    <property type="evidence" value="ECO:0000316"/>
    <property type="project" value="WormBase"/>
</dbReference>
<dbReference type="GO" id="GO:0031581">
    <property type="term" value="P:hemidesmosome assembly"/>
    <property type="evidence" value="ECO:0000316"/>
    <property type="project" value="WormBase"/>
</dbReference>
<dbReference type="GO" id="GO:0040011">
    <property type="term" value="P:locomotion"/>
    <property type="evidence" value="ECO:0000315"/>
    <property type="project" value="WormBase"/>
</dbReference>
<dbReference type="GO" id="GO:0007005">
    <property type="term" value="P:mitochondrion organization"/>
    <property type="evidence" value="ECO:0000315"/>
    <property type="project" value="UniProtKB"/>
</dbReference>
<dbReference type="GO" id="GO:0046716">
    <property type="term" value="P:muscle cell cellular homeostasis"/>
    <property type="evidence" value="ECO:0000315"/>
    <property type="project" value="UniProtKB"/>
</dbReference>
<dbReference type="GO" id="GO:0007517">
    <property type="term" value="P:muscle organ development"/>
    <property type="evidence" value="ECO:0000315"/>
    <property type="project" value="WormBase"/>
</dbReference>
<dbReference type="GO" id="GO:0048644">
    <property type="term" value="P:muscle organ morphogenesis"/>
    <property type="evidence" value="ECO:0000316"/>
    <property type="project" value="WormBase"/>
</dbReference>
<dbReference type="GO" id="GO:0030239">
    <property type="term" value="P:myofibril assembly"/>
    <property type="evidence" value="ECO:0000270"/>
    <property type="project" value="UniProtKB"/>
</dbReference>
<dbReference type="GO" id="GO:0002119">
    <property type="term" value="P:nematode larval development"/>
    <property type="evidence" value="ECO:0000315"/>
    <property type="project" value="UniProtKB"/>
</dbReference>
<dbReference type="GO" id="GO:1905905">
    <property type="term" value="P:nematode pharyngeal gland morphogenesis"/>
    <property type="evidence" value="ECO:0000315"/>
    <property type="project" value="UniProtKB"/>
</dbReference>
<dbReference type="GO" id="GO:0160094">
    <property type="term" value="P:nematode pharynx development"/>
    <property type="evidence" value="ECO:0000315"/>
    <property type="project" value="UniProtKB"/>
</dbReference>
<dbReference type="GO" id="GO:0040017">
    <property type="term" value="P:positive regulation of locomotion"/>
    <property type="evidence" value="ECO:0000315"/>
    <property type="project" value="UniProtKB"/>
</dbReference>
<dbReference type="GO" id="GO:0060279">
    <property type="term" value="P:positive regulation of ovulation"/>
    <property type="evidence" value="ECO:0000315"/>
    <property type="project" value="UniProtKB"/>
</dbReference>
<dbReference type="GO" id="GO:0060298">
    <property type="term" value="P:positive regulation of sarcomere organization"/>
    <property type="evidence" value="ECO:0000315"/>
    <property type="project" value="UniProtKB"/>
</dbReference>
<dbReference type="CDD" id="cd00054">
    <property type="entry name" value="EGF_CA"/>
    <property type="match status" value="1"/>
</dbReference>
<dbReference type="CDD" id="cd00055">
    <property type="entry name" value="EGF_Lam"/>
    <property type="match status" value="6"/>
</dbReference>
<dbReference type="CDD" id="cd05743">
    <property type="entry name" value="Ig_Perlecan_like"/>
    <property type="match status" value="1"/>
</dbReference>
<dbReference type="CDD" id="cd05754">
    <property type="entry name" value="IgI_Perlecan_like"/>
    <property type="match status" value="1"/>
</dbReference>
<dbReference type="CDD" id="cd00110">
    <property type="entry name" value="LamG"/>
    <property type="match status" value="3"/>
</dbReference>
<dbReference type="CDD" id="cd00112">
    <property type="entry name" value="LDLa"/>
    <property type="match status" value="2"/>
</dbReference>
<dbReference type="FunFam" id="2.60.40.10:FF:003799">
    <property type="match status" value="1"/>
</dbReference>
<dbReference type="FunFam" id="2.10.25.10:FF:000552">
    <property type="entry name" value="Basement membrane proteoglycan"/>
    <property type="match status" value="1"/>
</dbReference>
<dbReference type="FunFam" id="2.10.25.10:FF:000700">
    <property type="entry name" value="Basement membrane proteoglycan"/>
    <property type="match status" value="1"/>
</dbReference>
<dbReference type="FunFam" id="2.10.25.10:FF:001396">
    <property type="entry name" value="Basement membrane proteoglycan"/>
    <property type="match status" value="1"/>
</dbReference>
<dbReference type="FunFam" id="2.60.120.200:FF:000286">
    <property type="entry name" value="Basement membrane proteoglycan"/>
    <property type="match status" value="1"/>
</dbReference>
<dbReference type="FunFam" id="2.60.40.10:FF:000637">
    <property type="entry name" value="Basement membrane proteoglycan"/>
    <property type="match status" value="6"/>
</dbReference>
<dbReference type="FunFam" id="2.60.40.10:FF:001694">
    <property type="entry name" value="Basement membrane proteoglycan"/>
    <property type="match status" value="1"/>
</dbReference>
<dbReference type="FunFam" id="2.60.40.10:FF:001784">
    <property type="entry name" value="Basement membrane proteoglycan"/>
    <property type="match status" value="1"/>
</dbReference>
<dbReference type="FunFam" id="2.60.40.10:FF:001785">
    <property type="entry name" value="Basement membrane proteoglycan"/>
    <property type="match status" value="1"/>
</dbReference>
<dbReference type="FunFam" id="2.60.40.10:FF:001814">
    <property type="entry name" value="Basement membrane proteoglycan"/>
    <property type="match status" value="1"/>
</dbReference>
<dbReference type="FunFam" id="2.60.40.10:FF:001817">
    <property type="entry name" value="Basement membrane proteoglycan"/>
    <property type="match status" value="1"/>
</dbReference>
<dbReference type="FunFam" id="2.60.40.10:FF:002038">
    <property type="entry name" value="Basement membrane proteoglycan"/>
    <property type="match status" value="1"/>
</dbReference>
<dbReference type="FunFam" id="2.10.25.10:FF:000106">
    <property type="entry name" value="Heparan sulfate proteoglycan 2"/>
    <property type="match status" value="1"/>
</dbReference>
<dbReference type="FunFam" id="2.170.300.10:FF:000012">
    <property type="entry name" value="Heparan sulfate proteoglycan 2"/>
    <property type="match status" value="1"/>
</dbReference>
<dbReference type="FunFam" id="4.10.400.10:FF:000062">
    <property type="entry name" value="Terribly reduced optic lobes, isoform AI"/>
    <property type="match status" value="1"/>
</dbReference>
<dbReference type="Gene3D" id="2.60.120.200">
    <property type="match status" value="3"/>
</dbReference>
<dbReference type="Gene3D" id="4.10.1220.10">
    <property type="entry name" value="EGF-type module"/>
    <property type="match status" value="1"/>
</dbReference>
<dbReference type="Gene3D" id="2.60.40.10">
    <property type="entry name" value="Immunoglobulins"/>
    <property type="match status" value="17"/>
</dbReference>
<dbReference type="Gene3D" id="2.10.25.10">
    <property type="entry name" value="Laminin"/>
    <property type="match status" value="6"/>
</dbReference>
<dbReference type="Gene3D" id="4.10.400.10">
    <property type="entry name" value="Low-density Lipoprotein Receptor"/>
    <property type="match status" value="2"/>
</dbReference>
<dbReference type="Gene3D" id="2.170.300.10">
    <property type="entry name" value="Tie2 ligand-binding domain superfamily"/>
    <property type="match status" value="1"/>
</dbReference>
<dbReference type="InterPro" id="IPR013320">
    <property type="entry name" value="ConA-like_dom_sf"/>
</dbReference>
<dbReference type="InterPro" id="IPR001881">
    <property type="entry name" value="EGF-like_Ca-bd_dom"/>
</dbReference>
<dbReference type="InterPro" id="IPR000742">
    <property type="entry name" value="EGF-like_dom"/>
</dbReference>
<dbReference type="InterPro" id="IPR009030">
    <property type="entry name" value="Growth_fac_rcpt_cys_sf"/>
</dbReference>
<dbReference type="InterPro" id="IPR007110">
    <property type="entry name" value="Ig-like_dom"/>
</dbReference>
<dbReference type="InterPro" id="IPR036179">
    <property type="entry name" value="Ig-like_dom_sf"/>
</dbReference>
<dbReference type="InterPro" id="IPR013783">
    <property type="entry name" value="Ig-like_fold"/>
</dbReference>
<dbReference type="InterPro" id="IPR013098">
    <property type="entry name" value="Ig_I-set"/>
</dbReference>
<dbReference type="InterPro" id="IPR003599">
    <property type="entry name" value="Ig_sub"/>
</dbReference>
<dbReference type="InterPro" id="IPR003598">
    <property type="entry name" value="Ig_sub2"/>
</dbReference>
<dbReference type="InterPro" id="IPR013151">
    <property type="entry name" value="Immunoglobulin_dom"/>
</dbReference>
<dbReference type="InterPro" id="IPR001791">
    <property type="entry name" value="Laminin_G"/>
</dbReference>
<dbReference type="InterPro" id="IPR000034">
    <property type="entry name" value="Laminin_IV"/>
</dbReference>
<dbReference type="InterPro" id="IPR036055">
    <property type="entry name" value="LDL_receptor-like_sf"/>
</dbReference>
<dbReference type="InterPro" id="IPR023415">
    <property type="entry name" value="LDLR_class-A_CS"/>
</dbReference>
<dbReference type="InterPro" id="IPR002172">
    <property type="entry name" value="LDrepeatLR_classA_rpt"/>
</dbReference>
<dbReference type="InterPro" id="IPR002049">
    <property type="entry name" value="LE_dom"/>
</dbReference>
<dbReference type="InterPro" id="IPR056863">
    <property type="entry name" value="LMN_ATRN_NET-like_EGF"/>
</dbReference>
<dbReference type="PANTHER" id="PTHR10075">
    <property type="entry name" value="BASIGIN RELATED"/>
    <property type="match status" value="1"/>
</dbReference>
<dbReference type="PANTHER" id="PTHR10075:SF100">
    <property type="entry name" value="FASCICLIN-2"/>
    <property type="match status" value="1"/>
</dbReference>
<dbReference type="Pfam" id="PF00053">
    <property type="entry name" value="EGF_laminin"/>
    <property type="match status" value="5"/>
</dbReference>
<dbReference type="Pfam" id="PF24973">
    <property type="entry name" value="EGF_LMN_ATRN"/>
    <property type="match status" value="2"/>
</dbReference>
<dbReference type="Pfam" id="PF07679">
    <property type="entry name" value="I-set"/>
    <property type="match status" value="1"/>
</dbReference>
<dbReference type="Pfam" id="PF00047">
    <property type="entry name" value="ig"/>
    <property type="match status" value="1"/>
</dbReference>
<dbReference type="Pfam" id="PF13895">
    <property type="entry name" value="Ig_2"/>
    <property type="match status" value="1"/>
</dbReference>
<dbReference type="Pfam" id="PF13927">
    <property type="entry name" value="Ig_3"/>
    <property type="match status" value="8"/>
</dbReference>
<dbReference type="Pfam" id="PF00052">
    <property type="entry name" value="Laminin_B"/>
    <property type="match status" value="2"/>
</dbReference>
<dbReference type="Pfam" id="PF00054">
    <property type="entry name" value="Laminin_G_1"/>
    <property type="match status" value="1"/>
</dbReference>
<dbReference type="Pfam" id="PF02210">
    <property type="entry name" value="Laminin_G_2"/>
    <property type="match status" value="2"/>
</dbReference>
<dbReference type="Pfam" id="PF00057">
    <property type="entry name" value="Ldl_recept_a"/>
    <property type="match status" value="3"/>
</dbReference>
<dbReference type="PRINTS" id="PR00261">
    <property type="entry name" value="LDLRECEPTOR"/>
</dbReference>
<dbReference type="SMART" id="SM00181">
    <property type="entry name" value="EGF"/>
    <property type="match status" value="6"/>
</dbReference>
<dbReference type="SMART" id="SM00179">
    <property type="entry name" value="EGF_CA"/>
    <property type="match status" value="2"/>
</dbReference>
<dbReference type="SMART" id="SM00180">
    <property type="entry name" value="EGF_Lam"/>
    <property type="match status" value="6"/>
</dbReference>
<dbReference type="SMART" id="SM00409">
    <property type="entry name" value="IG"/>
    <property type="match status" value="17"/>
</dbReference>
<dbReference type="SMART" id="SM00408">
    <property type="entry name" value="IGc2"/>
    <property type="match status" value="17"/>
</dbReference>
<dbReference type="SMART" id="SM00281">
    <property type="entry name" value="LamB"/>
    <property type="match status" value="2"/>
</dbReference>
<dbReference type="SMART" id="SM00282">
    <property type="entry name" value="LamG"/>
    <property type="match status" value="3"/>
</dbReference>
<dbReference type="SMART" id="SM00192">
    <property type="entry name" value="LDLa"/>
    <property type="match status" value="3"/>
</dbReference>
<dbReference type="SUPFAM" id="SSF49899">
    <property type="entry name" value="Concanavalin A-like lectins/glucanases"/>
    <property type="match status" value="3"/>
</dbReference>
<dbReference type="SUPFAM" id="SSF57196">
    <property type="entry name" value="EGF/Laminin"/>
    <property type="match status" value="3"/>
</dbReference>
<dbReference type="SUPFAM" id="SSF57184">
    <property type="entry name" value="Growth factor receptor domain"/>
    <property type="match status" value="1"/>
</dbReference>
<dbReference type="SUPFAM" id="SSF48726">
    <property type="entry name" value="Immunoglobulin"/>
    <property type="match status" value="15"/>
</dbReference>
<dbReference type="SUPFAM" id="SSF57424">
    <property type="entry name" value="LDL receptor-like module"/>
    <property type="match status" value="3"/>
</dbReference>
<dbReference type="PROSITE" id="PS00022">
    <property type="entry name" value="EGF_1"/>
    <property type="match status" value="7"/>
</dbReference>
<dbReference type="PROSITE" id="PS01186">
    <property type="entry name" value="EGF_2"/>
    <property type="match status" value="2"/>
</dbReference>
<dbReference type="PROSITE" id="PS50026">
    <property type="entry name" value="EGF_3"/>
    <property type="match status" value="3"/>
</dbReference>
<dbReference type="PROSITE" id="PS01248">
    <property type="entry name" value="EGF_LAM_1"/>
    <property type="match status" value="7"/>
</dbReference>
<dbReference type="PROSITE" id="PS50027">
    <property type="entry name" value="EGF_LAM_2"/>
    <property type="match status" value="5"/>
</dbReference>
<dbReference type="PROSITE" id="PS50835">
    <property type="entry name" value="IG_LIKE"/>
    <property type="match status" value="17"/>
</dbReference>
<dbReference type="PROSITE" id="PS50025">
    <property type="entry name" value="LAM_G_DOMAIN"/>
    <property type="match status" value="3"/>
</dbReference>
<dbReference type="PROSITE" id="PS51115">
    <property type="entry name" value="LAMININ_IVA"/>
    <property type="match status" value="2"/>
</dbReference>
<dbReference type="PROSITE" id="PS01209">
    <property type="entry name" value="LDLRA_1"/>
    <property type="match status" value="3"/>
</dbReference>
<dbReference type="PROSITE" id="PS50068">
    <property type="entry name" value="LDLRA_2"/>
    <property type="match status" value="3"/>
</dbReference>
<comment type="function">
    <text evidence="10 12 13 15 16 17">Component of an integrin containing attachment complex, which is required for muscle development and maintenance (PubMed:22253611). Probable structural role in myofilament assembly and/or attachment of the myofilament lattice to the cell membrane (PubMed:11438655, PubMed:17326220, PubMed:8393416). May be an extracellular anchor for integrin receptors in body wall muscles and myoepithelial sheath cells (PubMed:17326220, PubMed:8393416). During the formation of neuromuscular junctions at the larval stage, negatively regulates membrane protrusion from body wall muscles, probably downstream of the integrin complex formed by pat-2 and pat-3 (PubMed:16495308). Involved in ovulation (PubMed:17326220). Required for normal lifespan (PubMed:36173858).</text>
</comment>
<comment type="subunit">
    <text evidence="21">Component of an integrin containing attachment complex, composed of at least pat-2, pat-3, pat-4, pat-6, unc-52, unc-97 and unc-112.</text>
</comment>
<comment type="subcellular location">
    <subcellularLocation>
        <location evidence="9">Secreted</location>
        <location evidence="9">Extracellular space</location>
        <location evidence="9">Extracellular matrix</location>
        <location evidence="9">Basement membrane</location>
    </subcellularLocation>
    <subcellularLocation>
        <location evidence="9">Cytoplasm</location>
        <location evidence="9">Myofibril</location>
        <location evidence="9">Sarcomere</location>
        <location evidence="9">M line</location>
    </subcellularLocation>
    <text evidence="9 13">In body wall muscles, colocalizes to dense bodies and M lines with beta-integrin pat-3 (PubMed:10512861). In myoepithelial sheath cells, colocalizes in dense body-like structures with actin thin filaments and pat-3 (PubMed:17326220).</text>
</comment>
<comment type="alternative products">
    <event type="alternative splicing"/>
    <isoform>
        <id>Q06561-1</id>
        <name evidence="25">e</name>
        <sequence type="displayed"/>
    </isoform>
    <isoform>
        <id>Q06561-2</id>
        <name evidence="22">a</name>
        <sequence type="described" ref="VSP_007195 VSP_007196"/>
    </isoform>
    <isoform>
        <id>Q06561-3</id>
        <name evidence="23">b</name>
        <sequence type="described" ref="VSP_007191 VSP_007192"/>
    </isoform>
    <isoform>
        <id>Q06561-4</id>
        <name evidence="24">c</name>
        <sequence type="described" ref="VSP_007193 VSP_007194 VSP_007195 VSP_007196"/>
    </isoform>
    <isoform>
        <id>Q06561-5</id>
        <name evidence="26">f</name>
        <sequence type="described" ref="VSP_020104 VSP_007195 VSP_020105"/>
    </isoform>
</comment>
<comment type="tissue specificity">
    <text evidence="9 13 17">Detected on embryonic and adult body wall muscle cells (at protein level) (PubMed:10512861, PubMed:8393416). Found in the basement membrane of all contractile tissues (at protein level) (PubMed:10512861). Expressed in gonadal sheath cells and spermatheca (PubMed:17326220).</text>
</comment>
<comment type="developmental stage">
    <text>Synthesized early in embryogenesis.</text>
</comment>
<comment type="disruption phenotype">
    <text evidence="12 13 15 16">RNAi-mediated knockdown in L4 larval stage, causes a small increase in ectopic membrane extensions from body wall muscles (PubMed:16495308). RNAi-mediated knockdown causes an accumulation in the proximal gonad of endomitotic mature oocytes in 30 percent of animals (PubMed:17326220). RNAi-mediated knockdown results in impaired mobility, mitochondrial fragmentation, and disrupted integrin attachment complexes in muscle (PubMed:22253611). This leads to degradation of muscle proteins in the cytosol, myofibrillar defects and disruption of sarcomere organization (PubMed:22253611). RNAi-mediated knockdown reduces lifespan (PubMed:36173858).</text>
</comment>